<reference key="1">
    <citation type="journal article" date="2004" name="Proc. Natl. Acad. Sci. U.S.A.">
        <title>The complete genomic sequence of Nocardia farcinica IFM 10152.</title>
        <authorList>
            <person name="Ishikawa J."/>
            <person name="Yamashita A."/>
            <person name="Mikami Y."/>
            <person name="Hoshino Y."/>
            <person name="Kurita H."/>
            <person name="Hotta K."/>
            <person name="Shiba T."/>
            <person name="Hattori M."/>
        </authorList>
    </citation>
    <scope>NUCLEOTIDE SEQUENCE [LARGE SCALE GENOMIC DNA]</scope>
    <source>
        <strain>IFM 10152</strain>
    </source>
</reference>
<keyword id="KW-0067">ATP-binding</keyword>
<keyword id="KW-1003">Cell membrane</keyword>
<keyword id="KW-0472">Membrane</keyword>
<keyword id="KW-0547">Nucleotide-binding</keyword>
<keyword id="KW-1185">Reference proteome</keyword>
<keyword id="KW-1278">Translocase</keyword>
<keyword id="KW-0813">Transport</keyword>
<dbReference type="EC" id="7.6.2.-" evidence="1"/>
<dbReference type="EMBL" id="AP006618">
    <property type="protein sequence ID" value="BAD57773.1"/>
    <property type="molecule type" value="Genomic_DNA"/>
</dbReference>
<dbReference type="RefSeq" id="WP_011209458.1">
    <property type="nucleotide sequence ID" value="NC_006361.1"/>
</dbReference>
<dbReference type="SMR" id="Q5YVL8"/>
<dbReference type="STRING" id="247156.NFA_29260"/>
<dbReference type="GeneID" id="61133647"/>
<dbReference type="KEGG" id="nfa:NFA_29260"/>
<dbReference type="eggNOG" id="COG4559">
    <property type="taxonomic scope" value="Bacteria"/>
</dbReference>
<dbReference type="HOGENOM" id="CLU_000604_1_11_11"/>
<dbReference type="OrthoDB" id="3579586at2"/>
<dbReference type="Proteomes" id="UP000006820">
    <property type="component" value="Chromosome"/>
</dbReference>
<dbReference type="GO" id="GO:0005886">
    <property type="term" value="C:plasma membrane"/>
    <property type="evidence" value="ECO:0007669"/>
    <property type="project" value="UniProtKB-SubCell"/>
</dbReference>
<dbReference type="GO" id="GO:0005524">
    <property type="term" value="F:ATP binding"/>
    <property type="evidence" value="ECO:0007669"/>
    <property type="project" value="UniProtKB-KW"/>
</dbReference>
<dbReference type="GO" id="GO:0016887">
    <property type="term" value="F:ATP hydrolysis activity"/>
    <property type="evidence" value="ECO:0007669"/>
    <property type="project" value="InterPro"/>
</dbReference>
<dbReference type="CDD" id="cd03214">
    <property type="entry name" value="ABC_Iron-Siderophores_B12_Hemin"/>
    <property type="match status" value="1"/>
</dbReference>
<dbReference type="FunFam" id="3.40.50.300:FF:000134">
    <property type="entry name" value="Iron-enterobactin ABC transporter ATP-binding protein"/>
    <property type="match status" value="1"/>
</dbReference>
<dbReference type="Gene3D" id="3.40.50.300">
    <property type="entry name" value="P-loop containing nucleotide triphosphate hydrolases"/>
    <property type="match status" value="1"/>
</dbReference>
<dbReference type="InterPro" id="IPR003593">
    <property type="entry name" value="AAA+_ATPase"/>
</dbReference>
<dbReference type="InterPro" id="IPR003439">
    <property type="entry name" value="ABC_transporter-like_ATP-bd"/>
</dbReference>
<dbReference type="InterPro" id="IPR017871">
    <property type="entry name" value="ABC_transporter-like_CS"/>
</dbReference>
<dbReference type="InterPro" id="IPR027417">
    <property type="entry name" value="P-loop_NTPase"/>
</dbReference>
<dbReference type="NCBIfam" id="NF010068">
    <property type="entry name" value="PRK13548.1"/>
    <property type="match status" value="1"/>
</dbReference>
<dbReference type="PANTHER" id="PTHR42794">
    <property type="entry name" value="HEMIN IMPORT ATP-BINDING PROTEIN HMUV"/>
    <property type="match status" value="1"/>
</dbReference>
<dbReference type="PANTHER" id="PTHR42794:SF1">
    <property type="entry name" value="HEMIN IMPORT ATP-BINDING PROTEIN HMUV"/>
    <property type="match status" value="1"/>
</dbReference>
<dbReference type="Pfam" id="PF00005">
    <property type="entry name" value="ABC_tran"/>
    <property type="match status" value="1"/>
</dbReference>
<dbReference type="SMART" id="SM00382">
    <property type="entry name" value="AAA"/>
    <property type="match status" value="1"/>
</dbReference>
<dbReference type="SUPFAM" id="SSF52540">
    <property type="entry name" value="P-loop containing nucleoside triphosphate hydrolases"/>
    <property type="match status" value="1"/>
</dbReference>
<dbReference type="PROSITE" id="PS00211">
    <property type="entry name" value="ABC_TRANSPORTER_1"/>
    <property type="match status" value="1"/>
</dbReference>
<dbReference type="PROSITE" id="PS50893">
    <property type="entry name" value="ABC_TRANSPORTER_2"/>
    <property type="match status" value="1"/>
</dbReference>
<dbReference type="PROSITE" id="PS51261">
    <property type="entry name" value="HMUV"/>
    <property type="match status" value="1"/>
</dbReference>
<accession>Q5YVL8</accession>
<name>HMUV_NOCFA</name>
<comment type="function">
    <text evidence="1">Part of the ABC transporter complex HmuTUV involved in hemin import. Responsible for energy coupling to the transport system.</text>
</comment>
<comment type="subunit">
    <text evidence="1">The complex is composed of two ATP-binding proteins (HmuV), two transmembrane proteins (HmuU) and a solute-binding protein (HmuT).</text>
</comment>
<comment type="subcellular location">
    <subcellularLocation>
        <location evidence="1">Cell membrane</location>
        <topology evidence="1">Peripheral membrane protein</topology>
    </subcellularLocation>
</comment>
<comment type="similarity">
    <text evidence="1">Belongs to the ABC transporter superfamily. Heme (hemin) importer (TC 3.A.1.14.5) family.</text>
</comment>
<organism>
    <name type="scientific">Nocardia farcinica (strain IFM 10152)</name>
    <dbReference type="NCBI Taxonomy" id="247156"/>
    <lineage>
        <taxon>Bacteria</taxon>
        <taxon>Bacillati</taxon>
        <taxon>Actinomycetota</taxon>
        <taxon>Actinomycetes</taxon>
        <taxon>Mycobacteriales</taxon>
        <taxon>Nocardiaceae</taxon>
        <taxon>Nocardia</taxon>
    </lineage>
</organism>
<evidence type="ECO:0000255" key="1">
    <source>
        <dbReference type="HAMAP-Rule" id="MF_01718"/>
    </source>
</evidence>
<feature type="chain" id="PRO_0000269604" description="Hemin import ATP-binding protein HmuV">
    <location>
        <begin position="1"/>
        <end position="288"/>
    </location>
</feature>
<feature type="domain" description="ABC transporter" evidence="1">
    <location>
        <begin position="31"/>
        <end position="269"/>
    </location>
</feature>
<feature type="binding site" evidence="1">
    <location>
        <begin position="68"/>
        <end position="75"/>
    </location>
    <ligand>
        <name>ATP</name>
        <dbReference type="ChEBI" id="CHEBI:30616"/>
    </ligand>
</feature>
<protein>
    <recommendedName>
        <fullName evidence="1">Hemin import ATP-binding protein HmuV</fullName>
        <ecNumber evidence="1">7.6.2.-</ecNumber>
    </recommendedName>
</protein>
<sequence length="288" mass="30155">MSTDLDRPRLGSLFTRGHELPTAPARGEITLRARGLVVERRGGSGPARRVLDQVDFAVAAGEIVALVGPNGAGKSTLLAALAGELTPAAGGVELDGHPLTHWSPLDMARRRAVLPQTHTVGFPFTAREVVAMGRAPWVRTPRADHDDDLIAAAMAAADVTHLAGRAFPTLSGGECARVALARVLAQDTPTLLLDEPTAALDLGHQEAVLRLAADRARDGAAVVVVLHDLGIAAAYADRVAVLDSGRVAADGPPRAVLTTDLLTRVYQHPVEVLDHPVTGAQLVLPVRN</sequence>
<gene>
    <name evidence="1" type="primary">hmuV</name>
    <name type="ordered locus">NFA_29260</name>
</gene>
<proteinExistence type="inferred from homology"/>